<organism>
    <name type="scientific">Rattus norvegicus</name>
    <name type="common">Rat</name>
    <dbReference type="NCBI Taxonomy" id="10116"/>
    <lineage>
        <taxon>Eukaryota</taxon>
        <taxon>Metazoa</taxon>
        <taxon>Chordata</taxon>
        <taxon>Craniata</taxon>
        <taxon>Vertebrata</taxon>
        <taxon>Euteleostomi</taxon>
        <taxon>Mammalia</taxon>
        <taxon>Eutheria</taxon>
        <taxon>Euarchontoglires</taxon>
        <taxon>Glires</taxon>
        <taxon>Rodentia</taxon>
        <taxon>Myomorpha</taxon>
        <taxon>Muroidea</taxon>
        <taxon>Muridae</taxon>
        <taxon>Murinae</taxon>
        <taxon>Rattus</taxon>
    </lineage>
</organism>
<accession>Q6PCT5</accession>
<comment type="function">
    <text evidence="1">Intrinsically disordered protein that acts as a scaffold, and which is involved in different processes, such as pre-mRNA splicing, transcription regulation, innate immunity and neuron development. Interacts with splicing-related factors via the intrinsically disordered region and regulates alternative splicing of target pre-mRNA species. May suppress the ability of POU3F2 to transactivate the DRD1 gene in a POU3F2 dependent manner. Can activate transcription directly or via association with the transcription machinery. May be involved in ATXN1 mutant-induced cell death. The interaction with ATXN1 mutant reduces levels of phosphorylated RNA polymerase II large subunit. Involved in the assembly of cytoplasmic stress granule, possibly by participating in the transport of neuronal RNA granules. Also acts as an innate immune sensor of infection by retroviruses, by detecting the presence of reverse-transcribed DNA in the cytosol. Directly binds retroviral reverse-transcribed DNA in the cytosol and interacts with CGAS, leading to activate the cGAS-STING signaling pathway, triggering type-I interferon production.</text>
</comment>
<comment type="subunit">
    <text evidence="1">Interacts with POU3F2/Brn-2, ATXN1, TXNL4A, HTT and AR. Interaction with ATXN1 correlates positively with the length of the polyglutamine tract. Interacts with RNA polymerase II large subunit in a phosphorylation-dependent manner. Forms a ternary complex with ATXN1 mutant and phosphorylated RNA polymerase II. Interacts (via C-terminus) with TXNL4A and CD2BP2. Interacts (via WW domain) with ATN1 and SF3B1, and may interact with additional splice factors. Interacts (via WW domain) with WBP11; Leading to reduce interaction between PQBP1 and TXNL4A. Interacts with CAPRIN1. Interacts with DDX1. Interacts with SFPQ. Interacts with KHSRP.</text>
</comment>
<comment type="subcellular location">
    <subcellularLocation>
        <location evidence="1">Nucleus</location>
    </subcellularLocation>
    <subcellularLocation>
        <location evidence="2">Nucleus speckle</location>
    </subcellularLocation>
    <subcellularLocation>
        <location evidence="1">Cytoplasmic granule</location>
    </subcellularLocation>
    <text evidence="1 2">Colocalizes with SRSF2 in nuclear speckles (By similarity). Colocalized with POU3F2. Colocalized with ATXN1 in nuclear inclusion bodies. Localizes to cytoplasmic stress granules (By similarity).</text>
</comment>
<comment type="domain">
    <text evidence="1">The WW domain may play a role as a transcriptional activator directly or via association with the transcription machinery. The WW domain mediates interaction with WBP11, ATN1, SF3B1 and the C-terminal domain of the RNA polymerase II large subunit.</text>
</comment>
<comment type="domain">
    <text evidence="1">Except for the WW domain, the protein is intrinsically disordered.</text>
</comment>
<gene>
    <name type="primary">Pqbp1</name>
</gene>
<feature type="chain" id="PRO_0000076091" description="Polyglutamine-binding protein 1">
    <location>
        <begin position="1"/>
        <end position="263"/>
    </location>
</feature>
<feature type="domain" description="WW" evidence="3">
    <location>
        <begin position="46"/>
        <end position="80"/>
    </location>
</feature>
<feature type="repeat" description="1-1; approximate">
    <location>
        <begin position="104"/>
        <end position="110"/>
    </location>
</feature>
<feature type="repeat" description="1-2">
    <location>
        <begin position="111"/>
        <end position="117"/>
    </location>
</feature>
<feature type="repeat" description="1-3; approximate">
    <location>
        <begin position="118"/>
        <end position="124"/>
    </location>
</feature>
<feature type="repeat" description="1-4; approximate">
    <location>
        <begin position="125"/>
        <end position="131"/>
    </location>
</feature>
<feature type="repeat" description="1-5">
    <location>
        <begin position="132"/>
        <end position="138"/>
    </location>
</feature>
<feature type="repeat" description="2-1">
    <location>
        <begin position="139"/>
        <end position="140"/>
    </location>
</feature>
<feature type="repeat" description="2-2">
    <location>
        <begin position="141"/>
        <end position="142"/>
    </location>
</feature>
<feature type="repeat" description="2-3">
    <location>
        <begin position="143"/>
        <end position="144"/>
    </location>
</feature>
<feature type="repeat" description="3-1">
    <location>
        <begin position="150"/>
        <end position="151"/>
    </location>
</feature>
<feature type="repeat" description="3-2">
    <location>
        <begin position="152"/>
        <end position="153"/>
    </location>
</feature>
<feature type="repeat" description="3-3">
    <location>
        <begin position="154"/>
        <end position="155"/>
    </location>
</feature>
<feature type="repeat" description="3-4">
    <location>
        <begin position="156"/>
        <end position="157"/>
    </location>
</feature>
<feature type="repeat" description="3-5">
    <location>
        <begin position="158"/>
        <end position="159"/>
    </location>
</feature>
<feature type="repeat" description="3-6">
    <location>
        <begin position="160"/>
        <end position="161"/>
    </location>
</feature>
<feature type="region of interest" description="Disordered" evidence="1">
    <location>
        <begin position="94"/>
        <end position="263"/>
    </location>
</feature>
<feature type="region of interest" description="5 X 7 AA approximate tandem repeats of D-R-[NS]-H-E-K-S">
    <location>
        <begin position="104"/>
        <end position="138"/>
    </location>
</feature>
<feature type="region of interest" description="3 X 2 AA tandem repeats of [DE]-R">
    <location>
        <begin position="139"/>
        <end position="144"/>
    </location>
</feature>
<feature type="region of interest" description="6 X 2 AA tandem repeats of [DE]-R">
    <location>
        <begin position="150"/>
        <end position="161"/>
    </location>
</feature>
<feature type="region of interest" description="Important for interaction with TXNL4A" evidence="1">
    <location>
        <begin position="243"/>
        <end position="253"/>
    </location>
</feature>
<feature type="compositionally biased region" description="Basic and acidic residues" evidence="4">
    <location>
        <begin position="99"/>
        <end position="173"/>
    </location>
</feature>
<feature type="modified residue" description="Phosphoserine" evidence="1">
    <location>
        <position position="245"/>
    </location>
</feature>
<dbReference type="EMBL" id="BC059163">
    <property type="protein sequence ID" value="AAH59163.1"/>
    <property type="molecule type" value="mRNA"/>
</dbReference>
<dbReference type="RefSeq" id="NP_001013979.1">
    <property type="nucleotide sequence ID" value="NM_001013957.1"/>
</dbReference>
<dbReference type="SMR" id="Q6PCT5"/>
<dbReference type="FunCoup" id="Q6PCT5">
    <property type="interactions" value="1868"/>
</dbReference>
<dbReference type="STRING" id="10116.ENSRNOP00000010536"/>
<dbReference type="iPTMnet" id="Q6PCT5"/>
<dbReference type="PhosphoSitePlus" id="Q6PCT5"/>
<dbReference type="PaxDb" id="10116-ENSRNOP00000010536"/>
<dbReference type="GeneID" id="302557"/>
<dbReference type="KEGG" id="rno:302557"/>
<dbReference type="UCSC" id="RGD:1549750">
    <property type="organism name" value="rat"/>
</dbReference>
<dbReference type="AGR" id="RGD:1549750"/>
<dbReference type="CTD" id="10084"/>
<dbReference type="RGD" id="1549750">
    <property type="gene designation" value="Pqbp1"/>
</dbReference>
<dbReference type="eggNOG" id="KOG3427">
    <property type="taxonomic scope" value="Eukaryota"/>
</dbReference>
<dbReference type="InParanoid" id="Q6PCT5"/>
<dbReference type="OrthoDB" id="42462at2759"/>
<dbReference type="PhylomeDB" id="Q6PCT5"/>
<dbReference type="Reactome" id="R-RNO-72163">
    <property type="pathway name" value="mRNA Splicing - Major Pathway"/>
</dbReference>
<dbReference type="PRO" id="PR:Q6PCT5"/>
<dbReference type="Proteomes" id="UP000002494">
    <property type="component" value="Unplaced"/>
</dbReference>
<dbReference type="GO" id="GO:0005813">
    <property type="term" value="C:centrosome"/>
    <property type="evidence" value="ECO:0000314"/>
    <property type="project" value="RGD"/>
</dbReference>
<dbReference type="GO" id="GO:0097546">
    <property type="term" value="C:ciliary base"/>
    <property type="evidence" value="ECO:0000314"/>
    <property type="project" value="RGD"/>
</dbReference>
<dbReference type="GO" id="GO:0005737">
    <property type="term" value="C:cytoplasm"/>
    <property type="evidence" value="ECO:0000266"/>
    <property type="project" value="RGD"/>
</dbReference>
<dbReference type="GO" id="GO:0010494">
    <property type="term" value="C:cytoplasmic stress granule"/>
    <property type="evidence" value="ECO:0000266"/>
    <property type="project" value="RGD"/>
</dbReference>
<dbReference type="GO" id="GO:0071598">
    <property type="term" value="C:neuronal ribonucleoprotein granule"/>
    <property type="evidence" value="ECO:0000266"/>
    <property type="project" value="RGD"/>
</dbReference>
<dbReference type="GO" id="GO:0016604">
    <property type="term" value="C:nuclear body"/>
    <property type="evidence" value="ECO:0000318"/>
    <property type="project" value="GO_Central"/>
</dbReference>
<dbReference type="GO" id="GO:0016607">
    <property type="term" value="C:nuclear speck"/>
    <property type="evidence" value="ECO:0000250"/>
    <property type="project" value="UniProtKB"/>
</dbReference>
<dbReference type="GO" id="GO:0005634">
    <property type="term" value="C:nucleus"/>
    <property type="evidence" value="ECO:0000266"/>
    <property type="project" value="RGD"/>
</dbReference>
<dbReference type="GO" id="GO:0003690">
    <property type="term" value="F:double-stranded DNA binding"/>
    <property type="evidence" value="ECO:0000250"/>
    <property type="project" value="UniProtKB"/>
</dbReference>
<dbReference type="GO" id="GO:0051020">
    <property type="term" value="F:GTPase binding"/>
    <property type="evidence" value="ECO:0000353"/>
    <property type="project" value="RGD"/>
</dbReference>
<dbReference type="GO" id="GO:0043021">
    <property type="term" value="F:ribonucleoprotein complex binding"/>
    <property type="evidence" value="ECO:0000266"/>
    <property type="project" value="RGD"/>
</dbReference>
<dbReference type="GO" id="GO:0002218">
    <property type="term" value="P:activation of innate immune response"/>
    <property type="evidence" value="ECO:0000250"/>
    <property type="project" value="UniProtKB"/>
</dbReference>
<dbReference type="GO" id="GO:0000380">
    <property type="term" value="P:alternative mRNA splicing, via spliceosome"/>
    <property type="evidence" value="ECO:0000250"/>
    <property type="project" value="UniProtKB"/>
</dbReference>
<dbReference type="GO" id="GO:0071360">
    <property type="term" value="P:cellular response to exogenous dsRNA"/>
    <property type="evidence" value="ECO:0000250"/>
    <property type="project" value="UniProtKB"/>
</dbReference>
<dbReference type="GO" id="GO:0051607">
    <property type="term" value="P:defense response to virus"/>
    <property type="evidence" value="ECO:0000250"/>
    <property type="project" value="UniProtKB"/>
</dbReference>
<dbReference type="GO" id="GO:0045087">
    <property type="term" value="P:innate immune response"/>
    <property type="evidence" value="ECO:0007669"/>
    <property type="project" value="UniProtKB-KW"/>
</dbReference>
<dbReference type="GO" id="GO:0031175">
    <property type="term" value="P:neuron projection development"/>
    <property type="evidence" value="ECO:0000250"/>
    <property type="project" value="UniProtKB"/>
</dbReference>
<dbReference type="GO" id="GO:0002230">
    <property type="term" value="P:positive regulation of defense response to virus by host"/>
    <property type="evidence" value="ECO:0000250"/>
    <property type="project" value="UniProtKB"/>
</dbReference>
<dbReference type="GO" id="GO:1902857">
    <property type="term" value="P:positive regulation of non-motile cilium assembly"/>
    <property type="evidence" value="ECO:0000315"/>
    <property type="project" value="RGD"/>
</dbReference>
<dbReference type="GO" id="GO:0032481">
    <property type="term" value="P:positive regulation of type I interferon production"/>
    <property type="evidence" value="ECO:0000250"/>
    <property type="project" value="UniProtKB"/>
</dbReference>
<dbReference type="GO" id="GO:0048814">
    <property type="term" value="P:regulation of dendrite morphogenesis"/>
    <property type="evidence" value="ECO:0000266"/>
    <property type="project" value="RGD"/>
</dbReference>
<dbReference type="GO" id="GO:0043484">
    <property type="term" value="P:regulation of RNA splicing"/>
    <property type="evidence" value="ECO:0000266"/>
    <property type="project" value="RGD"/>
</dbReference>
<dbReference type="FunFam" id="3.40.30.10:FF:000140">
    <property type="entry name" value="polyglutamine-binding protein 1 isoform X1"/>
    <property type="match status" value="1"/>
</dbReference>
<dbReference type="Gene3D" id="2.20.70.10">
    <property type="match status" value="1"/>
</dbReference>
<dbReference type="Gene3D" id="3.40.30.10">
    <property type="entry name" value="Glutaredoxin"/>
    <property type="match status" value="1"/>
</dbReference>
<dbReference type="InterPro" id="IPR001202">
    <property type="entry name" value="WW_dom"/>
</dbReference>
<dbReference type="InterPro" id="IPR036020">
    <property type="entry name" value="WW_dom_sf"/>
</dbReference>
<dbReference type="PANTHER" id="PTHR21737">
    <property type="entry name" value="POLYGLUTAMINE BINDING PROTEIN 1/MARVEL MEMBRANE-ASSOCIATING DOMAIN CONTAINING 3"/>
    <property type="match status" value="1"/>
</dbReference>
<dbReference type="PANTHER" id="PTHR21737:SF3">
    <property type="entry name" value="POLYGLUTAMINE-BINDING PROTEIN 1"/>
    <property type="match status" value="1"/>
</dbReference>
<dbReference type="SMART" id="SM00456">
    <property type="entry name" value="WW"/>
    <property type="match status" value="1"/>
</dbReference>
<dbReference type="SUPFAM" id="SSF51045">
    <property type="entry name" value="WW domain"/>
    <property type="match status" value="1"/>
</dbReference>
<dbReference type="PROSITE" id="PS50020">
    <property type="entry name" value="WW_DOMAIN_2"/>
    <property type="match status" value="1"/>
</dbReference>
<protein>
    <recommendedName>
        <fullName>Polyglutamine-binding protein 1</fullName>
        <shortName>PQBP-1</shortName>
    </recommendedName>
    <alternativeName>
        <fullName>Polyglutamine tract-binding protein 1</fullName>
    </alternativeName>
</protein>
<reference key="1">
    <citation type="journal article" date="2004" name="Genome Res.">
        <title>The status, quality, and expansion of the NIH full-length cDNA project: the Mammalian Gene Collection (MGC).</title>
        <authorList>
            <consortium name="The MGC Project Team"/>
        </authorList>
    </citation>
    <scope>NUCLEOTIDE SEQUENCE [LARGE SCALE MRNA]</scope>
    <source>
        <tissue>Pituitary</tissue>
    </source>
</reference>
<keyword id="KW-0391">Immunity</keyword>
<keyword id="KW-0399">Innate immunity</keyword>
<keyword id="KW-0507">mRNA processing</keyword>
<keyword id="KW-0508">mRNA splicing</keyword>
<keyword id="KW-0539">Nucleus</keyword>
<keyword id="KW-0597">Phosphoprotein</keyword>
<keyword id="KW-1185">Reference proteome</keyword>
<keyword id="KW-0677">Repeat</keyword>
<keyword id="KW-0804">Transcription</keyword>
<keyword id="KW-0805">Transcription regulation</keyword>
<name>PQBP1_RAT</name>
<evidence type="ECO:0000250" key="1">
    <source>
        <dbReference type="UniProtKB" id="O60828"/>
    </source>
</evidence>
<evidence type="ECO:0000250" key="2">
    <source>
        <dbReference type="UniProtKB" id="Q91VJ5"/>
    </source>
</evidence>
<evidence type="ECO:0000255" key="3">
    <source>
        <dbReference type="PROSITE-ProRule" id="PRU00224"/>
    </source>
</evidence>
<evidence type="ECO:0000256" key="4">
    <source>
        <dbReference type="SAM" id="MobiDB-lite"/>
    </source>
</evidence>
<sequence length="263" mass="30529">MPLPVALQTRLAKRGILKHLEPEPEEEIIAEDYDDDPVDYEATRIEGLPPSWYKVFDPSCGLPYYWNVETDLVSWLSPHDPNFVVSKSAKKLRNSNADAEDKSERNLEKVDRNHEKSDRSHEKPDRSHEKADRNHEKSDRERERNYDKVDRERDRDRERERAFDKADREDGKDRRHHRREELAPYPKNKKATSRKDEELDPMDPSSYSDAPRGTWSTGLPKRNEAKTGADTTAAGPLFQQRPYPSPGAVLRANAEASRSKQQD</sequence>
<proteinExistence type="evidence at transcript level"/>